<reference key="1">
    <citation type="journal article" date="1987" name="Biochemistry">
        <title>Ovomucoid third domains from 100 avian species: isolation, sequences, and hypervariability of enzyme-inhibitor contact residues.</title>
        <authorList>
            <person name="Laskowski M. Jr."/>
            <person name="Kato I."/>
            <person name="Ardelt W."/>
            <person name="Cook J."/>
            <person name="Denton A."/>
            <person name="Empie M.W."/>
            <person name="Kohr W.J."/>
            <person name="Park S.J."/>
            <person name="Parks K."/>
            <person name="Schatzley B.L."/>
            <person name="Schoenberger O.L."/>
            <person name="Tashiro M."/>
            <person name="Vichot G."/>
            <person name="Whatley H.E."/>
            <person name="Wieczorek A."/>
            <person name="Wieczorek M."/>
        </authorList>
    </citation>
    <scope>PROTEIN SEQUENCE</scope>
</reference>
<keyword id="KW-0903">Direct protein sequencing</keyword>
<keyword id="KW-1015">Disulfide bond</keyword>
<keyword id="KW-0325">Glycoprotein</keyword>
<keyword id="KW-0646">Protease inhibitor</keyword>
<keyword id="KW-0677">Repeat</keyword>
<keyword id="KW-0964">Secreted</keyword>
<keyword id="KW-0722">Serine protease inhibitor</keyword>
<comment type="subcellular location">
    <subcellularLocation>
        <location>Secreted</location>
    </subcellularLocation>
</comment>
<comment type="domain">
    <text>Avian ovomucoid consists of three homologous, tandem Kazal family inhibitory domains.</text>
</comment>
<protein>
    <recommendedName>
        <fullName>Ovomucoid</fullName>
    </recommendedName>
</protein>
<accession>P68131</accession>
<accession>P05572</accession>
<evidence type="ECO:0000255" key="1">
    <source>
        <dbReference type="PROSITE-ProRule" id="PRU00798"/>
    </source>
</evidence>
<name>IOVO_OXYJA</name>
<sequence>VATVDCSDYPKPACTMEYMPLCGSDNKTYGNKCNFCNAVVDSNGTLTLSHFGKC</sequence>
<organism>
    <name type="scientific">Oxyura jamaicensis</name>
    <name type="common">Ruddy duck</name>
    <name type="synonym">Anas jamaicensis</name>
    <dbReference type="NCBI Taxonomy" id="8884"/>
    <lineage>
        <taxon>Eukaryota</taxon>
        <taxon>Metazoa</taxon>
        <taxon>Chordata</taxon>
        <taxon>Craniata</taxon>
        <taxon>Vertebrata</taxon>
        <taxon>Euteleostomi</taxon>
        <taxon>Archelosauria</taxon>
        <taxon>Archosauria</taxon>
        <taxon>Dinosauria</taxon>
        <taxon>Saurischia</taxon>
        <taxon>Theropoda</taxon>
        <taxon>Coelurosauria</taxon>
        <taxon>Aves</taxon>
        <taxon>Neognathae</taxon>
        <taxon>Galloanserae</taxon>
        <taxon>Anseriformes</taxon>
        <taxon>Anatidae</taxon>
        <taxon>Anatinae</taxon>
        <taxon>Oxyura</taxon>
    </lineage>
</organism>
<feature type="chain" id="PRO_0000073154" description="Ovomucoid">
    <location>
        <begin position="1" status="less than"/>
        <end position="54" status="greater than"/>
    </location>
</feature>
<feature type="domain" description="Kazal-like" evidence="1">
    <location>
        <begin position="4"/>
        <end position="54"/>
    </location>
</feature>
<feature type="site" description="Reactive bond 3">
    <location>
        <begin position="16"/>
        <end position="17"/>
    </location>
</feature>
<feature type="glycosylation site" description="N-linked (GlcNAc...) asparagine">
    <location>
        <position position="43"/>
    </location>
</feature>
<feature type="disulfide bond">
    <location>
        <begin position="6"/>
        <end position="36"/>
    </location>
</feature>
<feature type="disulfide bond">
    <location>
        <begin position="14"/>
        <end position="33"/>
    </location>
</feature>
<feature type="disulfide bond">
    <location>
        <begin position="22"/>
        <end position="54"/>
    </location>
</feature>
<feature type="non-terminal residue">
    <location>
        <position position="1"/>
    </location>
</feature>
<feature type="non-terminal residue">
    <location>
        <position position="54"/>
    </location>
</feature>
<proteinExistence type="evidence at protein level"/>
<dbReference type="PIR" id="C31445">
    <property type="entry name" value="C31445"/>
</dbReference>
<dbReference type="SMR" id="P68131"/>
<dbReference type="GO" id="GO:0005576">
    <property type="term" value="C:extracellular region"/>
    <property type="evidence" value="ECO:0007669"/>
    <property type="project" value="UniProtKB-SubCell"/>
</dbReference>
<dbReference type="GO" id="GO:0004867">
    <property type="term" value="F:serine-type endopeptidase inhibitor activity"/>
    <property type="evidence" value="ECO:0007669"/>
    <property type="project" value="UniProtKB-KW"/>
</dbReference>
<dbReference type="CDD" id="cd00104">
    <property type="entry name" value="KAZAL_FS"/>
    <property type="match status" value="1"/>
</dbReference>
<dbReference type="FunFam" id="3.30.60.30:FF:000037">
    <property type="entry name" value="Ovomucoid"/>
    <property type="match status" value="1"/>
</dbReference>
<dbReference type="Gene3D" id="3.30.60.30">
    <property type="match status" value="1"/>
</dbReference>
<dbReference type="InterPro" id="IPR051597">
    <property type="entry name" value="Bifunctional_prot_inhibitor"/>
</dbReference>
<dbReference type="InterPro" id="IPR002350">
    <property type="entry name" value="Kazal_dom"/>
</dbReference>
<dbReference type="InterPro" id="IPR036058">
    <property type="entry name" value="Kazal_dom_sf"/>
</dbReference>
<dbReference type="InterPro" id="IPR001239">
    <property type="entry name" value="Prot_inh_Kazal-m"/>
</dbReference>
<dbReference type="PANTHER" id="PTHR47729:SF1">
    <property type="entry name" value="OVOMUCOID-LIKE-RELATED"/>
    <property type="match status" value="1"/>
</dbReference>
<dbReference type="PANTHER" id="PTHR47729">
    <property type="entry name" value="SERINE PEPTIDASE INHIBITOR, KAZAL TYPE 2, TANDEM DUPLICATE 1-RELATED"/>
    <property type="match status" value="1"/>
</dbReference>
<dbReference type="Pfam" id="PF00050">
    <property type="entry name" value="Kazal_1"/>
    <property type="match status" value="1"/>
</dbReference>
<dbReference type="PRINTS" id="PR00290">
    <property type="entry name" value="KAZALINHBTR"/>
</dbReference>
<dbReference type="SMART" id="SM00280">
    <property type="entry name" value="KAZAL"/>
    <property type="match status" value="1"/>
</dbReference>
<dbReference type="SUPFAM" id="SSF100895">
    <property type="entry name" value="Kazal-type serine protease inhibitors"/>
    <property type="match status" value="1"/>
</dbReference>
<dbReference type="PROSITE" id="PS00282">
    <property type="entry name" value="KAZAL_1"/>
    <property type="match status" value="1"/>
</dbReference>
<dbReference type="PROSITE" id="PS51465">
    <property type="entry name" value="KAZAL_2"/>
    <property type="match status" value="1"/>
</dbReference>